<sequence length="178" mass="18688">MAATEQSLAPAGSSAPPSGKEEGAGPSSGTEGDPAGSSSTPEAPSIPDSSNPSATVPEANVKPPAAGSAALDLPIGPAPQGPAPVAEASPRSPPGPGGSRPGPETFRQRFRQFRYQDAAGPREAFRQLRELSRQWLRPDIRTKEQIVEMLVQEQLLAILPEAARARRLRRRTDVRITG</sequence>
<keyword id="KW-0539">Nucleus</keyword>
<keyword id="KW-1185">Reference proteome</keyword>
<protein>
    <recommendedName>
        <fullName>SCAN domain-containing protein 1</fullName>
    </recommendedName>
</protein>
<proteinExistence type="evidence at transcript level"/>
<feature type="chain" id="PRO_0000285505" description="SCAN domain-containing protein 1">
    <location>
        <begin position="1"/>
        <end position="178"/>
    </location>
</feature>
<feature type="domain" description="SCAN box" evidence="2">
    <location>
        <begin position="107"/>
        <end position="178"/>
    </location>
</feature>
<feature type="region of interest" description="Disordered" evidence="3">
    <location>
        <begin position="1"/>
        <end position="107"/>
    </location>
</feature>
<feature type="compositionally biased region" description="Low complexity" evidence="3">
    <location>
        <begin position="9"/>
        <end position="18"/>
    </location>
</feature>
<feature type="compositionally biased region" description="Polar residues" evidence="3">
    <location>
        <begin position="36"/>
        <end position="54"/>
    </location>
</feature>
<accession>Q32PG5</accession>
<evidence type="ECO:0000250" key="1"/>
<evidence type="ECO:0000255" key="2">
    <source>
        <dbReference type="PROSITE-ProRule" id="PRU00187"/>
    </source>
</evidence>
<evidence type="ECO:0000256" key="3">
    <source>
        <dbReference type="SAM" id="MobiDB-lite"/>
    </source>
</evidence>
<organism>
    <name type="scientific">Bos taurus</name>
    <name type="common">Bovine</name>
    <dbReference type="NCBI Taxonomy" id="9913"/>
    <lineage>
        <taxon>Eukaryota</taxon>
        <taxon>Metazoa</taxon>
        <taxon>Chordata</taxon>
        <taxon>Craniata</taxon>
        <taxon>Vertebrata</taxon>
        <taxon>Euteleostomi</taxon>
        <taxon>Mammalia</taxon>
        <taxon>Eutheria</taxon>
        <taxon>Laurasiatheria</taxon>
        <taxon>Artiodactyla</taxon>
        <taxon>Ruminantia</taxon>
        <taxon>Pecora</taxon>
        <taxon>Bovidae</taxon>
        <taxon>Bovinae</taxon>
        <taxon>Bos</taxon>
    </lineage>
</organism>
<gene>
    <name type="primary">SCAND1</name>
</gene>
<dbReference type="EMBL" id="BC108124">
    <property type="protein sequence ID" value="AAI08125.1"/>
    <property type="molecule type" value="mRNA"/>
</dbReference>
<dbReference type="RefSeq" id="NP_001073059.1">
    <property type="nucleotide sequence ID" value="NM_001079591.1"/>
</dbReference>
<dbReference type="SMR" id="Q32PG5"/>
<dbReference type="FunCoup" id="Q32PG5">
    <property type="interactions" value="87"/>
</dbReference>
<dbReference type="STRING" id="9913.ENSBTAP00000007322"/>
<dbReference type="PaxDb" id="9913-ENSBTAP00000007322"/>
<dbReference type="GeneID" id="513983"/>
<dbReference type="KEGG" id="bta:513983"/>
<dbReference type="CTD" id="51282"/>
<dbReference type="VEuPathDB" id="HostDB:ENSBTAG00000005573"/>
<dbReference type="eggNOG" id="KOG1721">
    <property type="taxonomic scope" value="Eukaryota"/>
</dbReference>
<dbReference type="HOGENOM" id="CLU_107409_0_0_1"/>
<dbReference type="InParanoid" id="Q32PG5"/>
<dbReference type="OMA" id="EKSEGAC"/>
<dbReference type="OrthoDB" id="6077919at2759"/>
<dbReference type="Proteomes" id="UP000009136">
    <property type="component" value="Chromosome 13"/>
</dbReference>
<dbReference type="Bgee" id="ENSBTAG00000005573">
    <property type="expression patterns" value="Expressed in retina and 110 other cell types or tissues"/>
</dbReference>
<dbReference type="GO" id="GO:0005634">
    <property type="term" value="C:nucleus"/>
    <property type="evidence" value="ECO:0007669"/>
    <property type="project" value="UniProtKB-SubCell"/>
</dbReference>
<dbReference type="CDD" id="cd07936">
    <property type="entry name" value="SCAN"/>
    <property type="match status" value="1"/>
</dbReference>
<dbReference type="FunFam" id="1.10.4020.10:FF:000003">
    <property type="entry name" value="SCAN domain-containing protein 1"/>
    <property type="match status" value="1"/>
</dbReference>
<dbReference type="Gene3D" id="1.10.4020.10">
    <property type="entry name" value="DNA breaking-rejoining enzymes"/>
    <property type="match status" value="1"/>
</dbReference>
<dbReference type="InterPro" id="IPR050916">
    <property type="entry name" value="SCAN-C2H2_zinc_finger"/>
</dbReference>
<dbReference type="InterPro" id="IPR003309">
    <property type="entry name" value="SCAN_dom"/>
</dbReference>
<dbReference type="InterPro" id="IPR038269">
    <property type="entry name" value="SCAN_sf"/>
</dbReference>
<dbReference type="PANTHER" id="PTHR45935">
    <property type="entry name" value="PROTEIN ZBED8-RELATED"/>
    <property type="match status" value="1"/>
</dbReference>
<dbReference type="PANTHER" id="PTHR45935:SF10">
    <property type="entry name" value="SCAN DOMAIN-CONTAINING 1"/>
    <property type="match status" value="1"/>
</dbReference>
<dbReference type="Pfam" id="PF02023">
    <property type="entry name" value="SCAN"/>
    <property type="match status" value="1"/>
</dbReference>
<dbReference type="SMART" id="SM00431">
    <property type="entry name" value="SCAN"/>
    <property type="match status" value="1"/>
</dbReference>
<dbReference type="SUPFAM" id="SSF47353">
    <property type="entry name" value="Retrovirus capsid dimerization domain-like"/>
    <property type="match status" value="1"/>
</dbReference>
<dbReference type="PROSITE" id="PS50804">
    <property type="entry name" value="SCAN_BOX"/>
    <property type="match status" value="1"/>
</dbReference>
<comment type="function">
    <text evidence="1">May regulate transcriptional activity.</text>
</comment>
<comment type="subunit">
    <text evidence="1">Interacts with ZNF202.</text>
</comment>
<comment type="subcellular location">
    <subcellularLocation>
        <location evidence="2">Nucleus</location>
    </subcellularLocation>
</comment>
<reference key="1">
    <citation type="submission" date="2005-10" db="EMBL/GenBank/DDBJ databases">
        <authorList>
            <consortium name="NIH - Mammalian Gene Collection (MGC) project"/>
        </authorList>
    </citation>
    <scope>NUCLEOTIDE SEQUENCE [LARGE SCALE MRNA]</scope>
    <source>
        <strain>Hereford</strain>
        <tissue>Hypothalamus</tissue>
    </source>
</reference>
<name>SCND1_BOVIN</name>